<proteinExistence type="inferred from homology"/>
<accession>Q57287</accession>
<accession>O05077</accession>
<reference key="1">
    <citation type="journal article" date="1995" name="Science">
        <title>Whole-genome random sequencing and assembly of Haemophilus influenzae Rd.</title>
        <authorList>
            <person name="Fleischmann R.D."/>
            <person name="Adams M.D."/>
            <person name="White O."/>
            <person name="Clayton R.A."/>
            <person name="Kirkness E.F."/>
            <person name="Kerlavage A.R."/>
            <person name="Bult C.J."/>
            <person name="Tomb J.-F."/>
            <person name="Dougherty B.A."/>
            <person name="Merrick J.M."/>
            <person name="McKenney K."/>
            <person name="Sutton G.G."/>
            <person name="FitzHugh W."/>
            <person name="Fields C.A."/>
            <person name="Gocayne J.D."/>
            <person name="Scott J.D."/>
            <person name="Shirley R."/>
            <person name="Liu L.-I."/>
            <person name="Glodek A."/>
            <person name="Kelley J.M."/>
            <person name="Weidman J.F."/>
            <person name="Phillips C.A."/>
            <person name="Spriggs T."/>
            <person name="Hedblom E."/>
            <person name="Cotton M.D."/>
            <person name="Utterback T.R."/>
            <person name="Hanna M.C."/>
            <person name="Nguyen D.T."/>
            <person name="Saudek D.M."/>
            <person name="Brandon R.C."/>
            <person name="Fine L.D."/>
            <person name="Fritchman J.L."/>
            <person name="Fuhrmann J.L."/>
            <person name="Geoghagen N.S.M."/>
            <person name="Gnehm C.L."/>
            <person name="McDonald L.A."/>
            <person name="Small K.V."/>
            <person name="Fraser C.M."/>
            <person name="Smith H.O."/>
            <person name="Venter J.C."/>
        </authorList>
    </citation>
    <scope>NUCLEOTIDE SEQUENCE [LARGE SCALE GENOMIC DNA]</scope>
    <source>
        <strain>ATCC 51907 / DSM 11121 / KW20 / Rd</strain>
    </source>
</reference>
<name>Y1578_HAEIN</name>
<protein>
    <recommendedName>
        <fullName>Uncharacterized glycosyltransferase HI_1578</fullName>
        <ecNumber>2.4.-.-</ecNumber>
    </recommendedName>
</protein>
<dbReference type="EC" id="2.4.-.-"/>
<dbReference type="EMBL" id="L42023">
    <property type="protein sequence ID" value="AAC23227.1"/>
    <property type="molecule type" value="Genomic_DNA"/>
</dbReference>
<dbReference type="PIR" id="H64130">
    <property type="entry name" value="H64130"/>
</dbReference>
<dbReference type="RefSeq" id="NP_439724.1">
    <property type="nucleotide sequence ID" value="NC_000907.1"/>
</dbReference>
<dbReference type="SMR" id="Q57287"/>
<dbReference type="CAZy" id="GT2">
    <property type="family name" value="Glycosyltransferase Family 2"/>
</dbReference>
<dbReference type="EnsemblBacteria" id="AAC23227">
    <property type="protein sequence ID" value="AAC23227"/>
    <property type="gene ID" value="HI_1578"/>
</dbReference>
<dbReference type="KEGG" id="hin:HI_1578"/>
<dbReference type="PATRIC" id="fig|71421.8.peg.1651"/>
<dbReference type="eggNOG" id="COG1216">
    <property type="taxonomic scope" value="Bacteria"/>
</dbReference>
<dbReference type="HOGENOM" id="CLU_025996_0_4_6"/>
<dbReference type="OrthoDB" id="9802649at2"/>
<dbReference type="PhylomeDB" id="Q57287"/>
<dbReference type="BioCyc" id="HINF71421:G1GJ1-1596-MONOMER"/>
<dbReference type="Proteomes" id="UP000000579">
    <property type="component" value="Chromosome"/>
</dbReference>
<dbReference type="GO" id="GO:0016757">
    <property type="term" value="F:glycosyltransferase activity"/>
    <property type="evidence" value="ECO:0007669"/>
    <property type="project" value="UniProtKB-KW"/>
</dbReference>
<dbReference type="CDD" id="cd00761">
    <property type="entry name" value="Glyco_tranf_GTA_type"/>
    <property type="match status" value="1"/>
</dbReference>
<dbReference type="Gene3D" id="3.90.550.10">
    <property type="entry name" value="Spore Coat Polysaccharide Biosynthesis Protein SpsA, Chain A"/>
    <property type="match status" value="1"/>
</dbReference>
<dbReference type="InterPro" id="IPR001173">
    <property type="entry name" value="Glyco_trans_2-like"/>
</dbReference>
<dbReference type="InterPro" id="IPR050834">
    <property type="entry name" value="Glycosyltransf_2"/>
</dbReference>
<dbReference type="InterPro" id="IPR029044">
    <property type="entry name" value="Nucleotide-diphossugar_trans"/>
</dbReference>
<dbReference type="PANTHER" id="PTHR43685">
    <property type="entry name" value="GLYCOSYLTRANSFERASE"/>
    <property type="match status" value="1"/>
</dbReference>
<dbReference type="PANTHER" id="PTHR43685:SF10">
    <property type="entry name" value="LACTO-N-NEOTETRAOSE BIOSYNTHESIS GLYCOSYL TRANSFERASE LGTA"/>
    <property type="match status" value="1"/>
</dbReference>
<dbReference type="Pfam" id="PF00535">
    <property type="entry name" value="Glycos_transf_2"/>
    <property type="match status" value="1"/>
</dbReference>
<dbReference type="SUPFAM" id="SSF53448">
    <property type="entry name" value="Nucleotide-diphospho-sugar transferases"/>
    <property type="match status" value="1"/>
</dbReference>
<feature type="chain" id="PRO_0000059240" description="Uncharacterized glycosyltransferase HI_1578">
    <location>
        <begin position="1"/>
        <end position="323"/>
    </location>
</feature>
<comment type="similarity">
    <text evidence="1">Belongs to the glycosyltransferase 2 family.</text>
</comment>
<organism>
    <name type="scientific">Haemophilus influenzae (strain ATCC 51907 / DSM 11121 / KW20 / Rd)</name>
    <dbReference type="NCBI Taxonomy" id="71421"/>
    <lineage>
        <taxon>Bacteria</taxon>
        <taxon>Pseudomonadati</taxon>
        <taxon>Pseudomonadota</taxon>
        <taxon>Gammaproteobacteria</taxon>
        <taxon>Pasteurellales</taxon>
        <taxon>Pasteurellaceae</taxon>
        <taxon>Haemophilus</taxon>
    </lineage>
</organism>
<keyword id="KW-0328">Glycosyltransferase</keyword>
<keyword id="KW-1185">Reference proteome</keyword>
<keyword id="KW-0808">Transferase</keyword>
<sequence length="323" mass="37681">MENCPLVSVIVCAYNAEQYIDESISSIINQTYENLEIIVINDGSTDLTLSHLEEISKLDKRIKIISNKYNLGFINSLNIGLGCFSGKYFARMDADDIAKPSWIEKIVTYLEKNDHITAMGSYLEIIVEKECGIIGSQYKTGDIWKNPLLHNDICEAMLFYNPIHNNTMIMRANVYREHKLIFNKDYPYAEDYKFWSEVSRLGCLANYPEALVKYRLHGNQTSSVYNHEQNETAKKIKRENITYYLNKIGIDIKVINSVSLLEIYHVDKSNKVLKSILYEMYMSLDKYTITSLLHFIKYHLELFDLKQNLKIIKKFIRKINVIF</sequence>
<evidence type="ECO:0000305" key="1"/>
<gene>
    <name type="ordered locus">HI_1578</name>
</gene>